<feature type="chain" id="PRO_0000141796" description="3-isopropylmalate dehydratase small subunit">
    <location>
        <begin position="1"/>
        <end position="201"/>
    </location>
</feature>
<comment type="function">
    <text evidence="1">Catalyzes the isomerization between 2-isopropylmalate and 3-isopropylmalate, via the formation of 2-isopropylmaleate.</text>
</comment>
<comment type="catalytic activity">
    <reaction evidence="1">
        <text>(2R,3S)-3-isopropylmalate = (2S)-2-isopropylmalate</text>
        <dbReference type="Rhea" id="RHEA:32287"/>
        <dbReference type="ChEBI" id="CHEBI:1178"/>
        <dbReference type="ChEBI" id="CHEBI:35121"/>
        <dbReference type="EC" id="4.2.1.33"/>
    </reaction>
</comment>
<comment type="pathway">
    <text evidence="1">Amino-acid biosynthesis; L-leucine biosynthesis; L-leucine from 3-methyl-2-oxobutanoate: step 2/4.</text>
</comment>
<comment type="subunit">
    <text evidence="1">Heterodimer of LeuC and LeuD.</text>
</comment>
<comment type="similarity">
    <text evidence="1">Belongs to the LeuD family. LeuD type 1 subfamily.</text>
</comment>
<dbReference type="EC" id="4.2.1.33" evidence="1"/>
<dbReference type="EMBL" id="AE014292">
    <property type="protein sequence ID" value="AAN34055.1"/>
    <property type="molecule type" value="Genomic_DNA"/>
</dbReference>
<dbReference type="EMBL" id="CP002998">
    <property type="protein sequence ID" value="AEM20332.1"/>
    <property type="molecule type" value="Genomic_DNA"/>
</dbReference>
<dbReference type="RefSeq" id="WP_002965763.1">
    <property type="nucleotide sequence ID" value="NZ_KN046805.1"/>
</dbReference>
<dbReference type="SMR" id="P65276"/>
<dbReference type="GeneID" id="97535045"/>
<dbReference type="KEGG" id="bms:BRA0883"/>
<dbReference type="KEGG" id="bsi:BS1330_II0876"/>
<dbReference type="PATRIC" id="fig|204722.21.peg.422"/>
<dbReference type="HOGENOM" id="CLU_081378_0_3_5"/>
<dbReference type="PhylomeDB" id="P65276"/>
<dbReference type="UniPathway" id="UPA00048">
    <property type="reaction ID" value="UER00071"/>
</dbReference>
<dbReference type="Proteomes" id="UP000007104">
    <property type="component" value="Chromosome II"/>
</dbReference>
<dbReference type="GO" id="GO:0009316">
    <property type="term" value="C:3-isopropylmalate dehydratase complex"/>
    <property type="evidence" value="ECO:0007669"/>
    <property type="project" value="InterPro"/>
</dbReference>
<dbReference type="GO" id="GO:0003861">
    <property type="term" value="F:3-isopropylmalate dehydratase activity"/>
    <property type="evidence" value="ECO:0007669"/>
    <property type="project" value="UniProtKB-UniRule"/>
</dbReference>
<dbReference type="GO" id="GO:0009098">
    <property type="term" value="P:L-leucine biosynthetic process"/>
    <property type="evidence" value="ECO:0007669"/>
    <property type="project" value="UniProtKB-UniRule"/>
</dbReference>
<dbReference type="CDD" id="cd01577">
    <property type="entry name" value="IPMI_Swivel"/>
    <property type="match status" value="1"/>
</dbReference>
<dbReference type="FunFam" id="3.20.19.10:FF:000003">
    <property type="entry name" value="3-isopropylmalate dehydratase small subunit"/>
    <property type="match status" value="1"/>
</dbReference>
<dbReference type="Gene3D" id="3.20.19.10">
    <property type="entry name" value="Aconitase, domain 4"/>
    <property type="match status" value="1"/>
</dbReference>
<dbReference type="HAMAP" id="MF_01031">
    <property type="entry name" value="LeuD_type1"/>
    <property type="match status" value="1"/>
</dbReference>
<dbReference type="InterPro" id="IPR004431">
    <property type="entry name" value="3-IsopropMal_deHydase_ssu"/>
</dbReference>
<dbReference type="InterPro" id="IPR015928">
    <property type="entry name" value="Aconitase/3IPM_dehydase_swvl"/>
</dbReference>
<dbReference type="InterPro" id="IPR000573">
    <property type="entry name" value="AconitaseA/IPMdHydase_ssu_swvl"/>
</dbReference>
<dbReference type="InterPro" id="IPR033940">
    <property type="entry name" value="IPMI_Swivel"/>
</dbReference>
<dbReference type="InterPro" id="IPR050075">
    <property type="entry name" value="LeuD"/>
</dbReference>
<dbReference type="NCBIfam" id="TIGR00171">
    <property type="entry name" value="leuD"/>
    <property type="match status" value="1"/>
</dbReference>
<dbReference type="NCBIfam" id="NF002458">
    <property type="entry name" value="PRK01641.1"/>
    <property type="match status" value="1"/>
</dbReference>
<dbReference type="PANTHER" id="PTHR43345:SF5">
    <property type="entry name" value="3-ISOPROPYLMALATE DEHYDRATASE SMALL SUBUNIT"/>
    <property type="match status" value="1"/>
</dbReference>
<dbReference type="PANTHER" id="PTHR43345">
    <property type="entry name" value="3-ISOPROPYLMALATE DEHYDRATASE SMALL SUBUNIT 2-RELATED-RELATED"/>
    <property type="match status" value="1"/>
</dbReference>
<dbReference type="Pfam" id="PF00694">
    <property type="entry name" value="Aconitase_C"/>
    <property type="match status" value="1"/>
</dbReference>
<dbReference type="SUPFAM" id="SSF52016">
    <property type="entry name" value="LeuD/IlvD-like"/>
    <property type="match status" value="1"/>
</dbReference>
<proteinExistence type="inferred from homology"/>
<accession>P65276</accession>
<accession>G0KDP4</accession>
<accession>Q8YCW7</accession>
<gene>
    <name evidence="1" type="primary">leuD</name>
    <name type="ordered locus">BRA0883</name>
    <name type="ordered locus">BS1330_II0876</name>
</gene>
<organism>
    <name type="scientific">Brucella suis biovar 1 (strain 1330)</name>
    <dbReference type="NCBI Taxonomy" id="204722"/>
    <lineage>
        <taxon>Bacteria</taxon>
        <taxon>Pseudomonadati</taxon>
        <taxon>Pseudomonadota</taxon>
        <taxon>Alphaproteobacteria</taxon>
        <taxon>Hyphomicrobiales</taxon>
        <taxon>Brucellaceae</taxon>
        <taxon>Brucella/Ochrobactrum group</taxon>
        <taxon>Brucella</taxon>
    </lineage>
</organism>
<reference key="1">
    <citation type="journal article" date="2002" name="Proc. Natl. Acad. Sci. U.S.A.">
        <title>The Brucella suis genome reveals fundamental similarities between animal and plant pathogens and symbionts.</title>
        <authorList>
            <person name="Paulsen I.T."/>
            <person name="Seshadri R."/>
            <person name="Nelson K.E."/>
            <person name="Eisen J.A."/>
            <person name="Heidelberg J.F."/>
            <person name="Read T.D."/>
            <person name="Dodson R.J."/>
            <person name="Umayam L.A."/>
            <person name="Brinkac L.M."/>
            <person name="Beanan M.J."/>
            <person name="Daugherty S.C."/>
            <person name="DeBoy R.T."/>
            <person name="Durkin A.S."/>
            <person name="Kolonay J.F."/>
            <person name="Madupu R."/>
            <person name="Nelson W.C."/>
            <person name="Ayodeji B."/>
            <person name="Kraul M."/>
            <person name="Shetty J."/>
            <person name="Malek J.A."/>
            <person name="Van Aken S.E."/>
            <person name="Riedmuller S."/>
            <person name="Tettelin H."/>
            <person name="Gill S.R."/>
            <person name="White O."/>
            <person name="Salzberg S.L."/>
            <person name="Hoover D.L."/>
            <person name="Lindler L.E."/>
            <person name="Halling S.M."/>
            <person name="Boyle S.M."/>
            <person name="Fraser C.M."/>
        </authorList>
    </citation>
    <scope>NUCLEOTIDE SEQUENCE [LARGE SCALE GENOMIC DNA]</scope>
    <source>
        <strain>1330</strain>
    </source>
</reference>
<reference key="2">
    <citation type="journal article" date="2011" name="J. Bacteriol.">
        <title>Revised genome sequence of Brucella suis 1330.</title>
        <authorList>
            <person name="Tae H."/>
            <person name="Shallom S."/>
            <person name="Settlage R."/>
            <person name="Preston D."/>
            <person name="Adams L.G."/>
            <person name="Garner H.R."/>
        </authorList>
    </citation>
    <scope>NUCLEOTIDE SEQUENCE [LARGE SCALE GENOMIC DNA]</scope>
    <source>
        <strain>1330</strain>
    </source>
</reference>
<evidence type="ECO:0000255" key="1">
    <source>
        <dbReference type="HAMAP-Rule" id="MF_01031"/>
    </source>
</evidence>
<name>LEUD_BRUSU</name>
<sequence>MDKFTKLTGVAAPLPIVNIDTDMIIPKDYLKTIKRTGLGKGLFAEMRFNEDGSENPDFVLNKPGYRKAQILVAGDNFGCGSSREHAPWALLDYGIRCVISTSFADIFYNNCFKNGILPIKVAQEDLDKLMDDASRGANATLTIDLETKQIHGPDGGTISFDLDDFKRHCLLNGLDDIGLTMEKAKSIDTFEAKNAEERPWA</sequence>
<protein>
    <recommendedName>
        <fullName evidence="1">3-isopropylmalate dehydratase small subunit</fullName>
        <ecNumber evidence="1">4.2.1.33</ecNumber>
    </recommendedName>
    <alternativeName>
        <fullName evidence="1">Alpha-IPM isomerase</fullName>
        <shortName evidence="1">IPMI</shortName>
    </alternativeName>
    <alternativeName>
        <fullName evidence="1">Isopropylmalate isomerase</fullName>
    </alternativeName>
</protein>
<keyword id="KW-0028">Amino-acid biosynthesis</keyword>
<keyword id="KW-0100">Branched-chain amino acid biosynthesis</keyword>
<keyword id="KW-0432">Leucine biosynthesis</keyword>
<keyword id="KW-0456">Lyase</keyword>